<comment type="subcellular location">
    <subcellularLocation>
        <location evidence="2">Cell membrane</location>
        <topology evidence="2">Multi-pass membrane protein</topology>
    </subcellularLocation>
</comment>
<feature type="chain" id="PRO_0000380074" description="Uncharacterized membrane protein YdzN">
    <location>
        <begin position="1"/>
        <end position="61"/>
    </location>
</feature>
<feature type="transmembrane region" description="Helical" evidence="1">
    <location>
        <begin position="7"/>
        <end position="24"/>
    </location>
</feature>
<feature type="transmembrane region" description="Helical" evidence="1">
    <location>
        <begin position="29"/>
        <end position="48"/>
    </location>
</feature>
<protein>
    <recommendedName>
        <fullName>Uncharacterized membrane protein YdzN</fullName>
    </recommendedName>
</protein>
<keyword id="KW-1003">Cell membrane</keyword>
<keyword id="KW-0472">Membrane</keyword>
<keyword id="KW-1185">Reference proteome</keyword>
<keyword id="KW-0812">Transmembrane</keyword>
<keyword id="KW-1133">Transmembrane helix</keyword>
<name>YDZN_BACSU</name>
<organism>
    <name type="scientific">Bacillus subtilis (strain 168)</name>
    <dbReference type="NCBI Taxonomy" id="224308"/>
    <lineage>
        <taxon>Bacteria</taxon>
        <taxon>Bacillati</taxon>
        <taxon>Bacillota</taxon>
        <taxon>Bacilli</taxon>
        <taxon>Bacillales</taxon>
        <taxon>Bacillaceae</taxon>
        <taxon>Bacillus</taxon>
    </lineage>
</organism>
<sequence>MRWSKWFNVFCIVALGSIYGYKLFTNQEVSTTRLIIASVIVLWNIVGLFSKESVKQAQQAN</sequence>
<dbReference type="EMBL" id="AL009126">
    <property type="protein sequence ID" value="CAX52554.1"/>
    <property type="molecule type" value="Genomic_DNA"/>
</dbReference>
<dbReference type="RefSeq" id="WP_009966647.1">
    <property type="nucleotide sequence ID" value="NZ_OZ025638.1"/>
</dbReference>
<dbReference type="RefSeq" id="YP_003097683.1">
    <property type="nucleotide sequence ID" value="NC_000964.3"/>
</dbReference>
<dbReference type="SMR" id="C0H3V7"/>
<dbReference type="PaxDb" id="224308-BSU05109"/>
<dbReference type="EnsemblBacteria" id="CAX52554">
    <property type="protein sequence ID" value="CAX52554"/>
    <property type="gene ID" value="BSU_05109"/>
</dbReference>
<dbReference type="GeneID" id="8303142"/>
<dbReference type="KEGG" id="bsu:BSU05109"/>
<dbReference type="PATRIC" id="fig|224308.179.peg.544"/>
<dbReference type="InParanoid" id="C0H3V7"/>
<dbReference type="OrthoDB" id="2895849at2"/>
<dbReference type="BioCyc" id="BSUB:BSU05109-MONOMER"/>
<dbReference type="Proteomes" id="UP000001570">
    <property type="component" value="Chromosome"/>
</dbReference>
<dbReference type="GO" id="GO:0005886">
    <property type="term" value="C:plasma membrane"/>
    <property type="evidence" value="ECO:0007669"/>
    <property type="project" value="UniProtKB-SubCell"/>
</dbReference>
<evidence type="ECO:0000255" key="1"/>
<evidence type="ECO:0000305" key="2"/>
<reference key="1">
    <citation type="journal article" date="1997" name="Nature">
        <title>The complete genome sequence of the Gram-positive bacterium Bacillus subtilis.</title>
        <authorList>
            <person name="Kunst F."/>
            <person name="Ogasawara N."/>
            <person name="Moszer I."/>
            <person name="Albertini A.M."/>
            <person name="Alloni G."/>
            <person name="Azevedo V."/>
            <person name="Bertero M.G."/>
            <person name="Bessieres P."/>
            <person name="Bolotin A."/>
            <person name="Borchert S."/>
            <person name="Borriss R."/>
            <person name="Boursier L."/>
            <person name="Brans A."/>
            <person name="Braun M."/>
            <person name="Brignell S.C."/>
            <person name="Bron S."/>
            <person name="Brouillet S."/>
            <person name="Bruschi C.V."/>
            <person name="Caldwell B."/>
            <person name="Capuano V."/>
            <person name="Carter N.M."/>
            <person name="Choi S.-K."/>
            <person name="Codani J.-J."/>
            <person name="Connerton I.F."/>
            <person name="Cummings N.J."/>
            <person name="Daniel R.A."/>
            <person name="Denizot F."/>
            <person name="Devine K.M."/>
            <person name="Duesterhoeft A."/>
            <person name="Ehrlich S.D."/>
            <person name="Emmerson P.T."/>
            <person name="Entian K.-D."/>
            <person name="Errington J."/>
            <person name="Fabret C."/>
            <person name="Ferrari E."/>
            <person name="Foulger D."/>
            <person name="Fritz C."/>
            <person name="Fujita M."/>
            <person name="Fujita Y."/>
            <person name="Fuma S."/>
            <person name="Galizzi A."/>
            <person name="Galleron N."/>
            <person name="Ghim S.-Y."/>
            <person name="Glaser P."/>
            <person name="Goffeau A."/>
            <person name="Golightly E.J."/>
            <person name="Grandi G."/>
            <person name="Guiseppi G."/>
            <person name="Guy B.J."/>
            <person name="Haga K."/>
            <person name="Haiech J."/>
            <person name="Harwood C.R."/>
            <person name="Henaut A."/>
            <person name="Hilbert H."/>
            <person name="Holsappel S."/>
            <person name="Hosono S."/>
            <person name="Hullo M.-F."/>
            <person name="Itaya M."/>
            <person name="Jones L.-M."/>
            <person name="Joris B."/>
            <person name="Karamata D."/>
            <person name="Kasahara Y."/>
            <person name="Klaerr-Blanchard M."/>
            <person name="Klein C."/>
            <person name="Kobayashi Y."/>
            <person name="Koetter P."/>
            <person name="Koningstein G."/>
            <person name="Krogh S."/>
            <person name="Kumano M."/>
            <person name="Kurita K."/>
            <person name="Lapidus A."/>
            <person name="Lardinois S."/>
            <person name="Lauber J."/>
            <person name="Lazarevic V."/>
            <person name="Lee S.-M."/>
            <person name="Levine A."/>
            <person name="Liu H."/>
            <person name="Masuda S."/>
            <person name="Mauel C."/>
            <person name="Medigue C."/>
            <person name="Medina N."/>
            <person name="Mellado R.P."/>
            <person name="Mizuno M."/>
            <person name="Moestl D."/>
            <person name="Nakai S."/>
            <person name="Noback M."/>
            <person name="Noone D."/>
            <person name="O'Reilly M."/>
            <person name="Ogawa K."/>
            <person name="Ogiwara A."/>
            <person name="Oudega B."/>
            <person name="Park S.-H."/>
            <person name="Parro V."/>
            <person name="Pohl T.M."/>
            <person name="Portetelle D."/>
            <person name="Porwollik S."/>
            <person name="Prescott A.M."/>
            <person name="Presecan E."/>
            <person name="Pujic P."/>
            <person name="Purnelle B."/>
            <person name="Rapoport G."/>
            <person name="Rey M."/>
            <person name="Reynolds S."/>
            <person name="Rieger M."/>
            <person name="Rivolta C."/>
            <person name="Rocha E."/>
            <person name="Roche B."/>
            <person name="Rose M."/>
            <person name="Sadaie Y."/>
            <person name="Sato T."/>
            <person name="Scanlan E."/>
            <person name="Schleich S."/>
            <person name="Schroeter R."/>
            <person name="Scoffone F."/>
            <person name="Sekiguchi J."/>
            <person name="Sekowska A."/>
            <person name="Seror S.J."/>
            <person name="Serror P."/>
            <person name="Shin B.-S."/>
            <person name="Soldo B."/>
            <person name="Sorokin A."/>
            <person name="Tacconi E."/>
            <person name="Takagi T."/>
            <person name="Takahashi H."/>
            <person name="Takemaru K."/>
            <person name="Takeuchi M."/>
            <person name="Tamakoshi A."/>
            <person name="Tanaka T."/>
            <person name="Terpstra P."/>
            <person name="Tognoni A."/>
            <person name="Tosato V."/>
            <person name="Uchiyama S."/>
            <person name="Vandenbol M."/>
            <person name="Vannier F."/>
            <person name="Vassarotti A."/>
            <person name="Viari A."/>
            <person name="Wambutt R."/>
            <person name="Wedler E."/>
            <person name="Wedler H."/>
            <person name="Weitzenegger T."/>
            <person name="Winters P."/>
            <person name="Wipat A."/>
            <person name="Yamamoto H."/>
            <person name="Yamane K."/>
            <person name="Yasumoto K."/>
            <person name="Yata K."/>
            <person name="Yoshida K."/>
            <person name="Yoshikawa H.-F."/>
            <person name="Zumstein E."/>
            <person name="Yoshikawa H."/>
            <person name="Danchin A."/>
        </authorList>
    </citation>
    <scope>NUCLEOTIDE SEQUENCE [LARGE SCALE GENOMIC DNA]</scope>
    <source>
        <strain>168</strain>
    </source>
</reference>
<proteinExistence type="predicted"/>
<gene>
    <name type="primary">ydzN</name>
    <name type="ordered locus">BSU05109</name>
</gene>
<accession>C0H3V7</accession>